<name>UNG_NEIMA</name>
<gene>
    <name evidence="1" type="primary">ung</name>
    <name type="ordered locus">NMA1384</name>
</gene>
<dbReference type="EC" id="3.2.2.27" evidence="1"/>
<dbReference type="EMBL" id="AL157959">
    <property type="protein sequence ID" value="CAM08557.1"/>
    <property type="molecule type" value="Genomic_DNA"/>
</dbReference>
<dbReference type="PIR" id="B81908">
    <property type="entry name" value="B81908"/>
</dbReference>
<dbReference type="RefSeq" id="WP_002246206.1">
    <property type="nucleotide sequence ID" value="NC_003116.1"/>
</dbReference>
<dbReference type="SMR" id="Q9JUC4"/>
<dbReference type="EnsemblBacteria" id="CAM08557">
    <property type="protein sequence ID" value="CAM08557"/>
    <property type="gene ID" value="NMA1384"/>
</dbReference>
<dbReference type="GeneID" id="93386011"/>
<dbReference type="KEGG" id="nma:NMA1384"/>
<dbReference type="HOGENOM" id="CLU_032162_3_1_4"/>
<dbReference type="Proteomes" id="UP000000626">
    <property type="component" value="Chromosome"/>
</dbReference>
<dbReference type="GO" id="GO:0005737">
    <property type="term" value="C:cytoplasm"/>
    <property type="evidence" value="ECO:0007669"/>
    <property type="project" value="UniProtKB-SubCell"/>
</dbReference>
<dbReference type="GO" id="GO:0004844">
    <property type="term" value="F:uracil DNA N-glycosylase activity"/>
    <property type="evidence" value="ECO:0007669"/>
    <property type="project" value="UniProtKB-UniRule"/>
</dbReference>
<dbReference type="GO" id="GO:0097510">
    <property type="term" value="P:base-excision repair, AP site formation via deaminated base removal"/>
    <property type="evidence" value="ECO:0007669"/>
    <property type="project" value="TreeGrafter"/>
</dbReference>
<dbReference type="CDD" id="cd10027">
    <property type="entry name" value="UDG-F1-like"/>
    <property type="match status" value="1"/>
</dbReference>
<dbReference type="FunFam" id="3.40.470.10:FF:000001">
    <property type="entry name" value="Uracil-DNA glycosylase"/>
    <property type="match status" value="1"/>
</dbReference>
<dbReference type="Gene3D" id="3.40.470.10">
    <property type="entry name" value="Uracil-DNA glycosylase-like domain"/>
    <property type="match status" value="1"/>
</dbReference>
<dbReference type="HAMAP" id="MF_00148">
    <property type="entry name" value="UDG"/>
    <property type="match status" value="1"/>
</dbReference>
<dbReference type="InterPro" id="IPR002043">
    <property type="entry name" value="UDG_fam1"/>
</dbReference>
<dbReference type="InterPro" id="IPR018085">
    <property type="entry name" value="Ura-DNA_Glyclase_AS"/>
</dbReference>
<dbReference type="InterPro" id="IPR005122">
    <property type="entry name" value="Uracil-DNA_glycosylase-like"/>
</dbReference>
<dbReference type="InterPro" id="IPR036895">
    <property type="entry name" value="Uracil-DNA_glycosylase-like_sf"/>
</dbReference>
<dbReference type="NCBIfam" id="NF003588">
    <property type="entry name" value="PRK05254.1-1"/>
    <property type="match status" value="1"/>
</dbReference>
<dbReference type="NCBIfam" id="NF003589">
    <property type="entry name" value="PRK05254.1-2"/>
    <property type="match status" value="1"/>
</dbReference>
<dbReference type="NCBIfam" id="NF003591">
    <property type="entry name" value="PRK05254.1-4"/>
    <property type="match status" value="1"/>
</dbReference>
<dbReference type="NCBIfam" id="NF003592">
    <property type="entry name" value="PRK05254.1-5"/>
    <property type="match status" value="1"/>
</dbReference>
<dbReference type="NCBIfam" id="TIGR00628">
    <property type="entry name" value="ung"/>
    <property type="match status" value="1"/>
</dbReference>
<dbReference type="PANTHER" id="PTHR11264">
    <property type="entry name" value="URACIL-DNA GLYCOSYLASE"/>
    <property type="match status" value="1"/>
</dbReference>
<dbReference type="PANTHER" id="PTHR11264:SF0">
    <property type="entry name" value="URACIL-DNA GLYCOSYLASE"/>
    <property type="match status" value="1"/>
</dbReference>
<dbReference type="Pfam" id="PF03167">
    <property type="entry name" value="UDG"/>
    <property type="match status" value="1"/>
</dbReference>
<dbReference type="SMART" id="SM00986">
    <property type="entry name" value="UDG"/>
    <property type="match status" value="1"/>
</dbReference>
<dbReference type="SMART" id="SM00987">
    <property type="entry name" value="UreE_C"/>
    <property type="match status" value="1"/>
</dbReference>
<dbReference type="SUPFAM" id="SSF52141">
    <property type="entry name" value="Uracil-DNA glycosylase-like"/>
    <property type="match status" value="1"/>
</dbReference>
<dbReference type="PROSITE" id="PS00130">
    <property type="entry name" value="U_DNA_GLYCOSYLASE"/>
    <property type="match status" value="1"/>
</dbReference>
<sequence length="219" mass="24685">MDTWHDALGGEKQQPYFQEILNAVRQERLSGQIIYPPAADVFNAFRLTAFDRVKAVILGQDPYHGAGQAHGLAFSVRQGIRIPPSLLNIYKELETDIEGFSIPAHGCLTAWAEQGVLLLNTVLTVRAGQAHSHALLGWERFTDTVIRQLATHRKHLVFMLWGGYAQQKRKLIDSQNYLILTAPHPSPLSAYRGFFGCRHFSQANSYLSRHGIDPINWKL</sequence>
<comment type="function">
    <text evidence="1">Excises uracil residues from the DNA which can arise as a result of misincorporation of dUMP residues by DNA polymerase or due to deamination of cytosine.</text>
</comment>
<comment type="catalytic activity">
    <reaction evidence="1">
        <text>Hydrolyzes single-stranded DNA or mismatched double-stranded DNA and polynucleotides, releasing free uracil.</text>
        <dbReference type="EC" id="3.2.2.27"/>
    </reaction>
</comment>
<comment type="subcellular location">
    <subcellularLocation>
        <location evidence="1">Cytoplasm</location>
    </subcellularLocation>
</comment>
<comment type="similarity">
    <text evidence="1">Belongs to the uracil-DNA glycosylase (UDG) superfamily. UNG family.</text>
</comment>
<organism>
    <name type="scientific">Neisseria meningitidis serogroup A / serotype 4A (strain DSM 15465 / Z2491)</name>
    <dbReference type="NCBI Taxonomy" id="122587"/>
    <lineage>
        <taxon>Bacteria</taxon>
        <taxon>Pseudomonadati</taxon>
        <taxon>Pseudomonadota</taxon>
        <taxon>Betaproteobacteria</taxon>
        <taxon>Neisseriales</taxon>
        <taxon>Neisseriaceae</taxon>
        <taxon>Neisseria</taxon>
    </lineage>
</organism>
<evidence type="ECO:0000255" key="1">
    <source>
        <dbReference type="HAMAP-Rule" id="MF_00148"/>
    </source>
</evidence>
<proteinExistence type="inferred from homology"/>
<keyword id="KW-0963">Cytoplasm</keyword>
<keyword id="KW-0227">DNA damage</keyword>
<keyword id="KW-0234">DNA repair</keyword>
<keyword id="KW-0378">Hydrolase</keyword>
<accession>Q9JUC4</accession>
<accession>A1IS09</accession>
<protein>
    <recommendedName>
        <fullName evidence="1">Uracil-DNA glycosylase</fullName>
        <shortName evidence="1">UDG</shortName>
        <ecNumber evidence="1">3.2.2.27</ecNumber>
    </recommendedName>
</protein>
<reference key="1">
    <citation type="journal article" date="2000" name="Nature">
        <title>Complete DNA sequence of a serogroup A strain of Neisseria meningitidis Z2491.</title>
        <authorList>
            <person name="Parkhill J."/>
            <person name="Achtman M."/>
            <person name="James K.D."/>
            <person name="Bentley S.D."/>
            <person name="Churcher C.M."/>
            <person name="Klee S.R."/>
            <person name="Morelli G."/>
            <person name="Basham D."/>
            <person name="Brown D."/>
            <person name="Chillingworth T."/>
            <person name="Davies R.M."/>
            <person name="Davis P."/>
            <person name="Devlin K."/>
            <person name="Feltwell T."/>
            <person name="Hamlin N."/>
            <person name="Holroyd S."/>
            <person name="Jagels K."/>
            <person name="Leather S."/>
            <person name="Moule S."/>
            <person name="Mungall K.L."/>
            <person name="Quail M.A."/>
            <person name="Rajandream M.A."/>
            <person name="Rutherford K.M."/>
            <person name="Simmonds M."/>
            <person name="Skelton J."/>
            <person name="Whitehead S."/>
            <person name="Spratt B.G."/>
            <person name="Barrell B.G."/>
        </authorList>
    </citation>
    <scope>NUCLEOTIDE SEQUENCE [LARGE SCALE GENOMIC DNA]</scope>
    <source>
        <strain>DSM 15465 / Z2491</strain>
    </source>
</reference>
<feature type="chain" id="PRO_0000176121" description="Uracil-DNA glycosylase">
    <location>
        <begin position="1"/>
        <end position="219"/>
    </location>
</feature>
<feature type="active site" description="Proton acceptor" evidence="1">
    <location>
        <position position="61"/>
    </location>
</feature>